<reference key="1">
    <citation type="journal article" date="2008" name="PLoS ONE">
        <title>Genome biology of Actinobacillus pleuropneumoniae JL03, an isolate of serotype 3 prevalent in China.</title>
        <authorList>
            <person name="Xu Z."/>
            <person name="Zhou Y."/>
            <person name="Li L."/>
            <person name="Zhou R."/>
            <person name="Xiao S."/>
            <person name="Wan Y."/>
            <person name="Zhang S."/>
            <person name="Wang K."/>
            <person name="Li W."/>
            <person name="Li L."/>
            <person name="Jin H."/>
            <person name="Kang M."/>
            <person name="Dalai B."/>
            <person name="Li T."/>
            <person name="Liu L."/>
            <person name="Cheng Y."/>
            <person name="Zhang L."/>
            <person name="Xu T."/>
            <person name="Zheng H."/>
            <person name="Pu S."/>
            <person name="Wang B."/>
            <person name="Gu W."/>
            <person name="Zhang X.L."/>
            <person name="Zhu G.-F."/>
            <person name="Wang S."/>
            <person name="Zhao G.-P."/>
            <person name="Chen H."/>
        </authorList>
    </citation>
    <scope>NUCLEOTIDE SEQUENCE [LARGE SCALE GENOMIC DNA]</scope>
    <source>
        <strain>JL03</strain>
    </source>
</reference>
<organism>
    <name type="scientific">Actinobacillus pleuropneumoniae serotype 3 (strain JL03)</name>
    <dbReference type="NCBI Taxonomy" id="434271"/>
    <lineage>
        <taxon>Bacteria</taxon>
        <taxon>Pseudomonadati</taxon>
        <taxon>Pseudomonadota</taxon>
        <taxon>Gammaproteobacteria</taxon>
        <taxon>Pasteurellales</taxon>
        <taxon>Pasteurellaceae</taxon>
        <taxon>Actinobacillus</taxon>
    </lineage>
</organism>
<sequence length="317" mass="35191">MSQEYLDFELPIAELEAKIESLRAVSEQDGKIDLDDEIKRLQKKSEELTKKTFANLDAWQVSRMARHPNRPYTLDYIEHIFTEFDELAGDRAFADDKAIVGGIARLDGRPVMVIGHQKGRTTKEKVRRNFGMPAPEGYRKALRLMEMADRFNMPIITFIDTPGAYPGIGAEERGQAEAIARNLREMAQLKVPVICTVIGEGGSGGALAIGVGDKVNMLQYSTYSVISPEGCASILWKSAEKASTAAEVMGLTAQRLKELNLIDSIVAEPLGGAHRDVAQMAENLKQQILADLQDLAPLSTEDLLDRRYQRLMSYGYV</sequence>
<protein>
    <recommendedName>
        <fullName evidence="1">Acetyl-coenzyme A carboxylase carboxyl transferase subunit alpha</fullName>
        <shortName evidence="1">ACCase subunit alpha</shortName>
        <shortName evidence="1">Acetyl-CoA carboxylase carboxyltransferase subunit alpha</shortName>
        <ecNumber evidence="1">2.1.3.15</ecNumber>
    </recommendedName>
</protein>
<feature type="chain" id="PRO_1000134453" description="Acetyl-coenzyme A carboxylase carboxyl transferase subunit alpha">
    <location>
        <begin position="1"/>
        <end position="317"/>
    </location>
</feature>
<feature type="domain" description="CoA carboxyltransferase C-terminal" evidence="2">
    <location>
        <begin position="40"/>
        <end position="294"/>
    </location>
</feature>
<gene>
    <name evidence="1" type="primary">accA</name>
    <name type="ordered locus">APJL_1511</name>
</gene>
<proteinExistence type="inferred from homology"/>
<accession>B0BR78</accession>
<evidence type="ECO:0000255" key="1">
    <source>
        <dbReference type="HAMAP-Rule" id="MF_00823"/>
    </source>
</evidence>
<evidence type="ECO:0000255" key="2">
    <source>
        <dbReference type="PROSITE-ProRule" id="PRU01137"/>
    </source>
</evidence>
<comment type="function">
    <text evidence="1">Component of the acetyl coenzyme A carboxylase (ACC) complex. First, biotin carboxylase catalyzes the carboxylation of biotin on its carrier protein (BCCP) and then the CO(2) group is transferred by the carboxyltransferase to acetyl-CoA to form malonyl-CoA.</text>
</comment>
<comment type="catalytic activity">
    <reaction evidence="1">
        <text>N(6)-carboxybiotinyl-L-lysyl-[protein] + acetyl-CoA = N(6)-biotinyl-L-lysyl-[protein] + malonyl-CoA</text>
        <dbReference type="Rhea" id="RHEA:54728"/>
        <dbReference type="Rhea" id="RHEA-COMP:10505"/>
        <dbReference type="Rhea" id="RHEA-COMP:10506"/>
        <dbReference type="ChEBI" id="CHEBI:57288"/>
        <dbReference type="ChEBI" id="CHEBI:57384"/>
        <dbReference type="ChEBI" id="CHEBI:83144"/>
        <dbReference type="ChEBI" id="CHEBI:83145"/>
        <dbReference type="EC" id="2.1.3.15"/>
    </reaction>
</comment>
<comment type="pathway">
    <text evidence="1">Lipid metabolism; malonyl-CoA biosynthesis; malonyl-CoA from acetyl-CoA: step 1/1.</text>
</comment>
<comment type="subunit">
    <text evidence="1">Acetyl-CoA carboxylase is a heterohexamer composed of biotin carboxyl carrier protein (AccB), biotin carboxylase (AccC) and two subunits each of ACCase subunit alpha (AccA) and ACCase subunit beta (AccD).</text>
</comment>
<comment type="subcellular location">
    <subcellularLocation>
        <location evidence="1">Cytoplasm</location>
    </subcellularLocation>
</comment>
<comment type="similarity">
    <text evidence="1">Belongs to the AccA family.</text>
</comment>
<name>ACCA_ACTPJ</name>
<dbReference type="EC" id="2.1.3.15" evidence="1"/>
<dbReference type="EMBL" id="CP000687">
    <property type="protein sequence ID" value="ABY70063.1"/>
    <property type="molecule type" value="Genomic_DNA"/>
</dbReference>
<dbReference type="RefSeq" id="WP_005598724.1">
    <property type="nucleotide sequence ID" value="NC_010278.1"/>
</dbReference>
<dbReference type="SMR" id="B0BR78"/>
<dbReference type="GeneID" id="48599753"/>
<dbReference type="KEGG" id="apj:APJL_1511"/>
<dbReference type="HOGENOM" id="CLU_015486_0_2_6"/>
<dbReference type="UniPathway" id="UPA00655">
    <property type="reaction ID" value="UER00711"/>
</dbReference>
<dbReference type="Proteomes" id="UP000008547">
    <property type="component" value="Chromosome"/>
</dbReference>
<dbReference type="GO" id="GO:0009317">
    <property type="term" value="C:acetyl-CoA carboxylase complex"/>
    <property type="evidence" value="ECO:0007669"/>
    <property type="project" value="InterPro"/>
</dbReference>
<dbReference type="GO" id="GO:0003989">
    <property type="term" value="F:acetyl-CoA carboxylase activity"/>
    <property type="evidence" value="ECO:0007669"/>
    <property type="project" value="InterPro"/>
</dbReference>
<dbReference type="GO" id="GO:0005524">
    <property type="term" value="F:ATP binding"/>
    <property type="evidence" value="ECO:0007669"/>
    <property type="project" value="UniProtKB-KW"/>
</dbReference>
<dbReference type="GO" id="GO:0016743">
    <property type="term" value="F:carboxyl- or carbamoyltransferase activity"/>
    <property type="evidence" value="ECO:0007669"/>
    <property type="project" value="UniProtKB-UniRule"/>
</dbReference>
<dbReference type="GO" id="GO:0006633">
    <property type="term" value="P:fatty acid biosynthetic process"/>
    <property type="evidence" value="ECO:0007669"/>
    <property type="project" value="UniProtKB-KW"/>
</dbReference>
<dbReference type="GO" id="GO:2001295">
    <property type="term" value="P:malonyl-CoA biosynthetic process"/>
    <property type="evidence" value="ECO:0007669"/>
    <property type="project" value="UniProtKB-UniRule"/>
</dbReference>
<dbReference type="FunFam" id="3.90.226.10:FF:000008">
    <property type="entry name" value="Acetyl-coenzyme A carboxylase carboxyl transferase subunit alpha"/>
    <property type="match status" value="1"/>
</dbReference>
<dbReference type="Gene3D" id="3.90.226.10">
    <property type="entry name" value="2-enoyl-CoA Hydratase, Chain A, domain 1"/>
    <property type="match status" value="1"/>
</dbReference>
<dbReference type="HAMAP" id="MF_00823">
    <property type="entry name" value="AcetylCoA_CT_alpha"/>
    <property type="match status" value="1"/>
</dbReference>
<dbReference type="InterPro" id="IPR001095">
    <property type="entry name" value="Acetyl_CoA_COase_a_su"/>
</dbReference>
<dbReference type="InterPro" id="IPR029045">
    <property type="entry name" value="ClpP/crotonase-like_dom_sf"/>
</dbReference>
<dbReference type="InterPro" id="IPR011763">
    <property type="entry name" value="COA_CT_C"/>
</dbReference>
<dbReference type="NCBIfam" id="TIGR00513">
    <property type="entry name" value="accA"/>
    <property type="match status" value="1"/>
</dbReference>
<dbReference type="NCBIfam" id="NF041504">
    <property type="entry name" value="AccA_sub"/>
    <property type="match status" value="1"/>
</dbReference>
<dbReference type="NCBIfam" id="NF004344">
    <property type="entry name" value="PRK05724.1"/>
    <property type="match status" value="1"/>
</dbReference>
<dbReference type="PANTHER" id="PTHR42853">
    <property type="entry name" value="ACETYL-COENZYME A CARBOXYLASE CARBOXYL TRANSFERASE SUBUNIT ALPHA"/>
    <property type="match status" value="1"/>
</dbReference>
<dbReference type="PANTHER" id="PTHR42853:SF3">
    <property type="entry name" value="ACETYL-COENZYME A CARBOXYLASE CARBOXYL TRANSFERASE SUBUNIT ALPHA, CHLOROPLASTIC"/>
    <property type="match status" value="1"/>
</dbReference>
<dbReference type="Pfam" id="PF03255">
    <property type="entry name" value="ACCA"/>
    <property type="match status" value="1"/>
</dbReference>
<dbReference type="PRINTS" id="PR01069">
    <property type="entry name" value="ACCCTRFRASEA"/>
</dbReference>
<dbReference type="SUPFAM" id="SSF52096">
    <property type="entry name" value="ClpP/crotonase"/>
    <property type="match status" value="1"/>
</dbReference>
<dbReference type="PROSITE" id="PS50989">
    <property type="entry name" value="COA_CT_CTER"/>
    <property type="match status" value="1"/>
</dbReference>
<keyword id="KW-0067">ATP-binding</keyword>
<keyword id="KW-0963">Cytoplasm</keyword>
<keyword id="KW-0275">Fatty acid biosynthesis</keyword>
<keyword id="KW-0276">Fatty acid metabolism</keyword>
<keyword id="KW-0444">Lipid biosynthesis</keyword>
<keyword id="KW-0443">Lipid metabolism</keyword>
<keyword id="KW-0547">Nucleotide-binding</keyword>
<keyword id="KW-0808">Transferase</keyword>